<proteinExistence type="evidence at protein level"/>
<protein>
    <recommendedName>
        <fullName>Transcription factor SOX-3</fullName>
    </recommendedName>
</protein>
<gene>
    <name type="primary">Sox3</name>
    <name type="synonym">Sox-3</name>
</gene>
<reference key="1">
    <citation type="journal article" date="1996" name="Development">
        <title>A comparison of the properties of Sox-3 with Sry and two related genes, Sox-1 and Sox-2.</title>
        <authorList>
            <person name="Collignon J."/>
            <person name="Sockanathan S."/>
            <person name="Hacker A."/>
            <person name="Cohen-Tannoudji M."/>
            <person name="Norris D."/>
            <person name="Rastan S."/>
            <person name="Stevanovic M."/>
            <person name="Goodfellow P.N."/>
            <person name="Lovell-Badge R."/>
        </authorList>
    </citation>
    <scope>NUCLEOTIDE SEQUENCE [GENOMIC DNA]</scope>
    <source>
        <strain>129</strain>
    </source>
</reference>
<reference key="2">
    <citation type="journal article" date="2003" name="Genesis">
        <title>Expression of Sox3 throughout the developing central nervous system is dependent on the combined action of discrete, evolutionarily conserved regulatory elements.</title>
        <authorList>
            <person name="Brunelli S."/>
            <person name="Silva Casey E."/>
            <person name="Bell D."/>
            <person name="Harland R."/>
            <person name="Lovell-Badge R."/>
        </authorList>
    </citation>
    <scope>NUCLEOTIDE SEQUENCE [GENOMIC DNA]</scope>
    <scope>TISSUE SPECIFICITY</scope>
    <source>
        <strain>129/Sv</strain>
    </source>
</reference>
<reference key="3">
    <citation type="journal article" date="2004" name="Mol. Cell. Biol.">
        <title>Interplay of SOX and POU factors in regulation of the nestin gene in neural primordial cells.</title>
        <authorList>
            <person name="Tanaka S."/>
            <person name="Kamachi Y."/>
            <person name="Tanouchi A."/>
            <person name="Hamada H."/>
            <person name="Jing N."/>
            <person name="Kondoh H."/>
        </authorList>
    </citation>
    <scope>NUCLEOTIDE SEQUENCE [MRNA]</scope>
    <source>
        <strain>129/Ola</strain>
    </source>
</reference>
<reference key="4">
    <citation type="journal article" date="2004" name="Nat. Genet.">
        <title>SOX3 is required during the formation of the hypothalamo-pituitary axis.</title>
        <authorList>
            <person name="Rizzoti K."/>
            <person name="Brunelli S."/>
            <person name="Carmignac D."/>
            <person name="Thomas P.Q."/>
            <person name="Robinson I.C."/>
            <person name="Lovell-Badge R."/>
        </authorList>
    </citation>
    <scope>FUNCTION</scope>
</reference>
<reference key="5">
    <citation type="journal article" date="2005" name="J. Clin. Invest.">
        <title>An interstitial deletion-insertion involving chromosomes 2p25.3 and Xq27.1, near SOX3, causes X-linked recessive hypoparathyroidism.</title>
        <authorList>
            <person name="Bowl M.R."/>
            <person name="Nesbit M.A."/>
            <person name="Harding B."/>
            <person name="Levy E."/>
            <person name="Jefferson A."/>
            <person name="Volpi E."/>
            <person name="Rizzoti K."/>
            <person name="Lovell-Badge R."/>
            <person name="Schlessinger D."/>
            <person name="Whyte M.P."/>
            <person name="Thakker R.V."/>
        </authorList>
    </citation>
    <scope>TISSUE SPECIFICITY</scope>
</reference>
<reference key="6">
    <citation type="journal article" date="2007" name="Development">
        <title>SOX3 activity during pharyngeal segmentation is required for craniofacial morphogenesis.</title>
        <authorList>
            <person name="Rizzoti K."/>
            <person name="Lovell-Badge R."/>
        </authorList>
    </citation>
    <scope>FUNCTION</scope>
    <scope>INTERACTION WITH SOX2 AND FGFR1</scope>
</reference>
<reference key="7">
    <citation type="journal article" date="2011" name="J. Clin. Invest.">
        <title>Identification of SOX3 as an XX male sex reversal gene in mice and humans.</title>
        <authorList>
            <person name="Sutton E."/>
            <person name="Hughes J."/>
            <person name="White S."/>
            <person name="Sekido R."/>
            <person name="Tan J."/>
            <person name="Arboleda V."/>
            <person name="Rogers N."/>
            <person name="Knower K."/>
            <person name="Rowley L."/>
            <person name="Eyre H."/>
            <person name="Rizzoti K."/>
            <person name="McAninch D."/>
            <person name="Goncalves J."/>
            <person name="Slee J."/>
            <person name="Turbitt E."/>
            <person name="Bruno D."/>
            <person name="Bengtsson H."/>
            <person name="Harley V."/>
            <person name="Vilain E."/>
            <person name="Sinclair A."/>
            <person name="Lovell-Badge R."/>
            <person name="Thomas P."/>
        </authorList>
    </citation>
    <scope>FUNCTION</scope>
</reference>
<keyword id="KW-0217">Developmental protein</keyword>
<keyword id="KW-0238">DNA-binding</keyword>
<keyword id="KW-0539">Nucleus</keyword>
<keyword id="KW-1185">Reference proteome</keyword>
<keyword id="KW-0804">Transcription</keyword>
<keyword id="KW-0805">Transcription regulation</keyword>
<feature type="chain" id="PRO_0000048721" description="Transcription factor SOX-3">
    <location>
        <begin position="1"/>
        <end position="375"/>
    </location>
</feature>
<feature type="DNA-binding region" description="HMG box" evidence="2">
    <location>
        <begin position="69"/>
        <end position="137"/>
    </location>
</feature>
<feature type="region of interest" description="Disordered" evidence="3">
    <location>
        <begin position="1"/>
        <end position="69"/>
    </location>
</feature>
<feature type="short sequence motif" description="9aaTAD" evidence="1">
    <location>
        <begin position="325"/>
        <end position="336"/>
    </location>
</feature>
<feature type="compositionally biased region" description="Low complexity" evidence="3">
    <location>
        <begin position="19"/>
        <end position="41"/>
    </location>
</feature>
<feature type="compositionally biased region" description="Gly residues" evidence="3">
    <location>
        <begin position="42"/>
        <end position="64"/>
    </location>
</feature>
<feature type="sequence conflict" description="In Ref. 1; CAA63845 and 2; AAL40744." evidence="9" ref="1 2">
    <original>L</original>
    <variation>P</variation>
    <location>
        <position position="160"/>
    </location>
</feature>
<feature type="sequence conflict" description="In Ref. 1; CAA63845 and 2; AAL40744." evidence="9" ref="1 2">
    <original>A</original>
    <variation>R</variation>
    <location>
        <position position="315"/>
    </location>
</feature>
<organism>
    <name type="scientific">Mus musculus</name>
    <name type="common">Mouse</name>
    <dbReference type="NCBI Taxonomy" id="10090"/>
    <lineage>
        <taxon>Eukaryota</taxon>
        <taxon>Metazoa</taxon>
        <taxon>Chordata</taxon>
        <taxon>Craniata</taxon>
        <taxon>Vertebrata</taxon>
        <taxon>Euteleostomi</taxon>
        <taxon>Mammalia</taxon>
        <taxon>Eutheria</taxon>
        <taxon>Euarchontoglires</taxon>
        <taxon>Glires</taxon>
        <taxon>Rodentia</taxon>
        <taxon>Myomorpha</taxon>
        <taxon>Muroidea</taxon>
        <taxon>Muridae</taxon>
        <taxon>Murinae</taxon>
        <taxon>Mus</taxon>
        <taxon>Mus</taxon>
    </lineage>
</organism>
<dbReference type="EMBL" id="X94125">
    <property type="protein sequence ID" value="CAA63845.1"/>
    <property type="molecule type" value="Genomic_DNA"/>
</dbReference>
<dbReference type="EMBL" id="AF434675">
    <property type="protein sequence ID" value="AAL40744.1"/>
    <property type="molecule type" value="Genomic_DNA"/>
</dbReference>
<dbReference type="EMBL" id="AB108674">
    <property type="protein sequence ID" value="BAC75669.1"/>
    <property type="molecule type" value="mRNA"/>
</dbReference>
<dbReference type="PIR" id="S10948">
    <property type="entry name" value="S10948"/>
</dbReference>
<dbReference type="SMR" id="P53784"/>
<dbReference type="FunCoup" id="P53784">
    <property type="interactions" value="382"/>
</dbReference>
<dbReference type="STRING" id="10090.ENSMUSP00000115237"/>
<dbReference type="GlyGen" id="P53784">
    <property type="glycosylation" value="1 site"/>
</dbReference>
<dbReference type="iPTMnet" id="P53784"/>
<dbReference type="PhosphoSitePlus" id="P53784"/>
<dbReference type="PaxDb" id="10090-ENSMUSP00000115237"/>
<dbReference type="ProteomicsDB" id="261115"/>
<dbReference type="AGR" id="MGI:98365"/>
<dbReference type="MGI" id="MGI:98365">
    <property type="gene designation" value="Sox3"/>
</dbReference>
<dbReference type="eggNOG" id="KOG0527">
    <property type="taxonomic scope" value="Eukaryota"/>
</dbReference>
<dbReference type="InParanoid" id="P53784"/>
<dbReference type="Reactome" id="R-MMU-3769402">
    <property type="pathway name" value="Deactivation of the beta-catenin transactivating complex"/>
</dbReference>
<dbReference type="ChiTaRS" id="Sox3">
    <property type="organism name" value="mouse"/>
</dbReference>
<dbReference type="PRO" id="PR:P53784"/>
<dbReference type="Proteomes" id="UP000000589">
    <property type="component" value="Unplaced"/>
</dbReference>
<dbReference type="RNAct" id="P53784">
    <property type="molecule type" value="protein"/>
</dbReference>
<dbReference type="GO" id="GO:0005634">
    <property type="term" value="C:nucleus"/>
    <property type="evidence" value="ECO:0007669"/>
    <property type="project" value="UniProtKB-SubCell"/>
</dbReference>
<dbReference type="GO" id="GO:0003677">
    <property type="term" value="F:DNA binding"/>
    <property type="evidence" value="ECO:0000314"/>
    <property type="project" value="MGI"/>
</dbReference>
<dbReference type="GO" id="GO:0000978">
    <property type="term" value="F:RNA polymerase II cis-regulatory region sequence-specific DNA binding"/>
    <property type="evidence" value="ECO:0000314"/>
    <property type="project" value="GO_Central"/>
</dbReference>
<dbReference type="GO" id="GO:0009887">
    <property type="term" value="P:animal organ morphogenesis"/>
    <property type="evidence" value="ECO:0000315"/>
    <property type="project" value="MGI"/>
</dbReference>
<dbReference type="GO" id="GO:0060324">
    <property type="term" value="P:face development"/>
    <property type="evidence" value="ECO:0000315"/>
    <property type="project" value="UniProtKB"/>
</dbReference>
<dbReference type="GO" id="GO:0030900">
    <property type="term" value="P:forebrain development"/>
    <property type="evidence" value="ECO:0000315"/>
    <property type="project" value="MGI"/>
</dbReference>
<dbReference type="GO" id="GO:0021854">
    <property type="term" value="P:hypothalamus development"/>
    <property type="evidence" value="ECO:0000315"/>
    <property type="project" value="UniProtKB"/>
</dbReference>
<dbReference type="GO" id="GO:0045665">
    <property type="term" value="P:negative regulation of neuron differentiation"/>
    <property type="evidence" value="ECO:0000250"/>
    <property type="project" value="UniProtKB"/>
</dbReference>
<dbReference type="GO" id="GO:0021983">
    <property type="term" value="P:pituitary gland development"/>
    <property type="evidence" value="ECO:0000315"/>
    <property type="project" value="UniProtKB"/>
</dbReference>
<dbReference type="GO" id="GO:0006355">
    <property type="term" value="P:regulation of DNA-templated transcription"/>
    <property type="evidence" value="ECO:0007669"/>
    <property type="project" value="InterPro"/>
</dbReference>
<dbReference type="GO" id="GO:0007423">
    <property type="term" value="P:sensory organ development"/>
    <property type="evidence" value="ECO:0000315"/>
    <property type="project" value="UniProtKB"/>
</dbReference>
<dbReference type="GO" id="GO:0060009">
    <property type="term" value="P:Sertoli cell development"/>
    <property type="evidence" value="ECO:0000270"/>
    <property type="project" value="UniProtKB"/>
</dbReference>
<dbReference type="GO" id="GO:0007530">
    <property type="term" value="P:sex determination"/>
    <property type="evidence" value="ECO:0000315"/>
    <property type="project" value="UniProtKB"/>
</dbReference>
<dbReference type="GO" id="GO:0048515">
    <property type="term" value="P:spermatid differentiation"/>
    <property type="evidence" value="ECO:0000315"/>
    <property type="project" value="MGI"/>
</dbReference>
<dbReference type="CDD" id="cd01388">
    <property type="entry name" value="HMG-box_SoxB"/>
    <property type="match status" value="1"/>
</dbReference>
<dbReference type="FunFam" id="1.10.30.10:FF:000002">
    <property type="entry name" value="transcription factor Sox-2"/>
    <property type="match status" value="1"/>
</dbReference>
<dbReference type="Gene3D" id="1.10.30.10">
    <property type="entry name" value="High mobility group box domain"/>
    <property type="match status" value="1"/>
</dbReference>
<dbReference type="InterPro" id="IPR009071">
    <property type="entry name" value="HMG_box_dom"/>
</dbReference>
<dbReference type="InterPro" id="IPR036910">
    <property type="entry name" value="HMG_box_dom_sf"/>
</dbReference>
<dbReference type="InterPro" id="IPR022097">
    <property type="entry name" value="SOX_fam"/>
</dbReference>
<dbReference type="InterPro" id="IPR050140">
    <property type="entry name" value="SRY-related_HMG-box_TF-like"/>
</dbReference>
<dbReference type="PANTHER" id="PTHR10270">
    <property type="entry name" value="SOX TRANSCRIPTION FACTOR"/>
    <property type="match status" value="1"/>
</dbReference>
<dbReference type="PANTHER" id="PTHR10270:SF111">
    <property type="entry name" value="TRANSCRIPTION FACTOR SOX-3"/>
    <property type="match status" value="1"/>
</dbReference>
<dbReference type="Pfam" id="PF00505">
    <property type="entry name" value="HMG_box"/>
    <property type="match status" value="1"/>
</dbReference>
<dbReference type="Pfam" id="PF12336">
    <property type="entry name" value="SOXp"/>
    <property type="match status" value="1"/>
</dbReference>
<dbReference type="SMART" id="SM00398">
    <property type="entry name" value="HMG"/>
    <property type="match status" value="1"/>
</dbReference>
<dbReference type="SUPFAM" id="SSF47095">
    <property type="entry name" value="HMG-box"/>
    <property type="match status" value="1"/>
</dbReference>
<dbReference type="PROSITE" id="PS50118">
    <property type="entry name" value="HMG_BOX_2"/>
    <property type="match status" value="1"/>
</dbReference>
<accession>P53784</accession>
<accession>Q80XF1</accession>
<comment type="function">
    <text evidence="5 7 8">Transcription factor required during the formation of the hypothalamo-pituitary axis. May function as a switch in neuronal development. Keeps neural cells undifferentiated by counteracting the activity of proneural proteins and suppresses neuronal differentiation. Required also within the pharyngeal epithelia for craniofacial morphogenesis. Controls a genetic switch in male development. Is necessary for initiating male sex determination by directing the development of supporting cell precursors (pre-Sertoli cells) as Sertoli rather than granulosa cells.</text>
</comment>
<comment type="subunit">
    <text evidence="7">Interacts with SOX2 and FGFR1.</text>
</comment>
<comment type="subcellular location">
    <subcellularLocation>
        <location>Nucleus</location>
    </subcellularLocation>
</comment>
<comment type="tissue specificity">
    <text evidence="4 6">Expressed in developing parathyroids of mouse embryos between 10.5 and 15.5 days post-coitum (PubMed:16167084). Expressed in the developing central nervous system (PubMed:12748963). Expressed in the developing urogenital ridge.</text>
</comment>
<comment type="domain">
    <text evidence="1">The 9aaTAD motif is a transactivation domain present in a large number of yeast and animal transcription factors.</text>
</comment>
<sequence>MYSLLETELKNPVGPPTPAAGTGVPAAPGAAGKSGANPAGGANAGNGGSGGANGGGGGGGGGGSDQDRVKRPMNAFMVWSRGQRRKMALENPKMHNSEISKRLGADWKLLTDAEKRPFIDEAKRLRAVHMKEYPDYKYRPRRKTKTLLKKDKYSLPGGLLPPGAAAAAAAAAAAAAASSPVGVGQRLDTYTHVNGWANGAYSLVQEQLGYAQPPSMSSPPPPPALPQMHRYDMAGLQYSPMMPPGAQSYMNAAAAAAAASGYGGMAPSAAAAAAAAYGQQPATAAAAAAAAAAMSLGPMGSVVKSEPSSPPPAIASHSQRACLGDLRDMISMYLPPGGDAADAASPLPGGRLHGVHQHYQGAGTAVNGTVPLTHI</sequence>
<evidence type="ECO:0000250" key="1">
    <source>
        <dbReference type="UniProtKB" id="P41225"/>
    </source>
</evidence>
<evidence type="ECO:0000255" key="2">
    <source>
        <dbReference type="PROSITE-ProRule" id="PRU00267"/>
    </source>
</evidence>
<evidence type="ECO:0000256" key="3">
    <source>
        <dbReference type="SAM" id="MobiDB-lite"/>
    </source>
</evidence>
<evidence type="ECO:0000269" key="4">
    <source>
    </source>
</evidence>
<evidence type="ECO:0000269" key="5">
    <source>
    </source>
</evidence>
<evidence type="ECO:0000269" key="6">
    <source>
    </source>
</evidence>
<evidence type="ECO:0000269" key="7">
    <source>
    </source>
</evidence>
<evidence type="ECO:0000269" key="8">
    <source>
    </source>
</evidence>
<evidence type="ECO:0000305" key="9"/>
<name>SOX3_MOUSE</name>